<accession>P39850</accession>
<keyword id="KW-0972">Capsule biogenesis/degradation</keyword>
<keyword id="KW-1003">Cell membrane</keyword>
<keyword id="KW-0270">Exopolysaccharide synthesis</keyword>
<keyword id="KW-0472">Membrane</keyword>
<keyword id="KW-0812">Transmembrane</keyword>
<keyword id="KW-1133">Transmembrane helix</keyword>
<reference key="1">
    <citation type="journal article" date="1994" name="J. Bacteriol.">
        <title>Sequence analysis and molecular characterization of genes required for the biosynthesis of type 1 capsular polysaccharide in Staphylococcus aureus.</title>
        <authorList>
            <person name="Lin W.S."/>
            <person name="Cunneen T."/>
            <person name="Lee C.Y."/>
        </authorList>
    </citation>
    <scope>NUCLEOTIDE SEQUENCE [GENOMIC DNA]</scope>
    <source>
        <strain>ATCC 49951 / M / NCTC 10649</strain>
    </source>
</reference>
<evidence type="ECO:0000255" key="1"/>
<evidence type="ECO:0000305" key="2"/>
<proteinExistence type="inferred from homology"/>
<comment type="function">
    <text>Required for the biosynthesis of type 1 capsular polysaccharide.</text>
</comment>
<comment type="pathway">
    <text>Capsule biogenesis; capsule polysaccharide biosynthesis.</text>
</comment>
<comment type="subcellular location">
    <subcellularLocation>
        <location evidence="2">Cell membrane</location>
        <topology evidence="2">Multi-pass membrane protein</topology>
    </subcellularLocation>
</comment>
<comment type="similarity">
    <text evidence="2">Belongs to the CpsC/CapA family.</text>
</comment>
<name>CAPA_STAAU</name>
<feature type="chain" id="PRO_0000217222" description="Capsular polysaccharide biosynthesis protein CapA">
    <location>
        <begin position="1"/>
        <end position="221"/>
    </location>
</feature>
<feature type="transmembrane region" description="Helical" evidence="1">
    <location>
        <begin position="20"/>
        <end position="40"/>
    </location>
</feature>
<feature type="transmembrane region" description="Helical" evidence="1">
    <location>
        <begin position="171"/>
        <end position="191"/>
    </location>
</feature>
<protein>
    <recommendedName>
        <fullName>Capsular polysaccharide biosynthesis protein CapA</fullName>
    </recommendedName>
</protein>
<gene>
    <name type="primary">capA</name>
</gene>
<sequence>MESTIDLSELLGRVRKNMKLLIILPLLGLLISAIISFFFLDVKYQASTQILVNQKGNDSQIMAQEVQSNIQLVNTYSEIVKSPRILDKVSKELDDKYSRSEISSMLTVTNQAESQVLNIDVESKSGSNSEKIANKIAEVFSDEVPDIMNVDNVSVLSTADNTGKQVAPKPMVNLVVGLVIGLVIALLIIFIKEVFDKRIKTEEEVENELVIPVLGSIQKFD</sequence>
<dbReference type="EMBL" id="U10927">
    <property type="protein sequence ID" value="AAA64640.1"/>
    <property type="molecule type" value="Genomic_DNA"/>
</dbReference>
<dbReference type="RefSeq" id="WP_115294893.1">
    <property type="nucleotide sequence ID" value="NZ_UGZL01000001.1"/>
</dbReference>
<dbReference type="SMR" id="P39850"/>
<dbReference type="TCDB" id="8.A.3.2.1">
    <property type="family name" value="the cytoplasmic membrane-periplasmic auxiliary-1 (mpa1) protein with cytoplasmic (c) domain (mpa1-c or mpa1+c) family"/>
</dbReference>
<dbReference type="UniPathway" id="UPA00934"/>
<dbReference type="GO" id="GO:0005886">
    <property type="term" value="C:plasma membrane"/>
    <property type="evidence" value="ECO:0007669"/>
    <property type="project" value="UniProtKB-SubCell"/>
</dbReference>
<dbReference type="GO" id="GO:0005351">
    <property type="term" value="F:carbohydrate:proton symporter activity"/>
    <property type="evidence" value="ECO:0007669"/>
    <property type="project" value="InterPro"/>
</dbReference>
<dbReference type="GO" id="GO:0004713">
    <property type="term" value="F:protein tyrosine kinase activity"/>
    <property type="evidence" value="ECO:0007669"/>
    <property type="project" value="TreeGrafter"/>
</dbReference>
<dbReference type="GO" id="GO:0045227">
    <property type="term" value="P:capsule polysaccharide biosynthetic process"/>
    <property type="evidence" value="ECO:0007669"/>
    <property type="project" value="UniProtKB-UniPathway"/>
</dbReference>
<dbReference type="GO" id="GO:0015774">
    <property type="term" value="P:polysaccharide transport"/>
    <property type="evidence" value="ECO:0007669"/>
    <property type="project" value="InterPro"/>
</dbReference>
<dbReference type="InterPro" id="IPR050445">
    <property type="entry name" value="Bact_polysacc_biosynth/exp"/>
</dbReference>
<dbReference type="InterPro" id="IPR005701">
    <property type="entry name" value="CpsC-like"/>
</dbReference>
<dbReference type="InterPro" id="IPR003856">
    <property type="entry name" value="LPS_length_determ_N_term"/>
</dbReference>
<dbReference type="NCBIfam" id="TIGR01006">
    <property type="entry name" value="polys_exp_MPA1"/>
    <property type="match status" value="1"/>
</dbReference>
<dbReference type="PANTHER" id="PTHR32309:SF13">
    <property type="entry name" value="FERRIC ENTEROBACTIN TRANSPORT PROTEIN FEPE"/>
    <property type="match status" value="1"/>
</dbReference>
<dbReference type="PANTHER" id="PTHR32309">
    <property type="entry name" value="TYROSINE-PROTEIN KINASE"/>
    <property type="match status" value="1"/>
</dbReference>
<dbReference type="Pfam" id="PF02706">
    <property type="entry name" value="Wzz"/>
    <property type="match status" value="1"/>
</dbReference>
<organism>
    <name type="scientific">Staphylococcus aureus</name>
    <dbReference type="NCBI Taxonomy" id="1280"/>
    <lineage>
        <taxon>Bacteria</taxon>
        <taxon>Bacillati</taxon>
        <taxon>Bacillota</taxon>
        <taxon>Bacilli</taxon>
        <taxon>Bacillales</taxon>
        <taxon>Staphylococcaceae</taxon>
        <taxon>Staphylococcus</taxon>
    </lineage>
</organism>